<sequence length="31" mass="3567">MAWHKPKFIEVSCAMEITRYAPADGDEPILF</sequence>
<keyword id="KW-0614">Plasmid</keyword>
<keyword id="KW-0884">PQQ biosynthesis</keyword>
<keyword id="KW-1185">Reference proteome</keyword>
<dbReference type="EMBL" id="AY013584">
    <property type="protein sequence ID" value="AAG42538.1"/>
    <property type="molecule type" value="Genomic_DNA"/>
</dbReference>
<dbReference type="EMBL" id="AL591985">
    <property type="protein sequence ID" value="CAC48597.1"/>
    <property type="molecule type" value="Genomic_DNA"/>
</dbReference>
<dbReference type="PIR" id="E95866">
    <property type="entry name" value="E95866"/>
</dbReference>
<dbReference type="RefSeq" id="NP_436737.1">
    <property type="nucleotide sequence ID" value="NC_003078.1"/>
</dbReference>
<dbReference type="RefSeq" id="WP_003528714.1">
    <property type="nucleotide sequence ID" value="NC_003078.1"/>
</dbReference>
<dbReference type="EnsemblBacteria" id="CAC48597">
    <property type="protein sequence ID" value="CAC48597"/>
    <property type="gene ID" value="SM_b20204"/>
</dbReference>
<dbReference type="GeneID" id="89578683"/>
<dbReference type="KEGG" id="sme:SM_b20204"/>
<dbReference type="HOGENOM" id="CLU_219399_1_0_5"/>
<dbReference type="OrthoDB" id="8163745at2"/>
<dbReference type="UniPathway" id="UPA00539"/>
<dbReference type="PRO" id="PR:Q9EXV2"/>
<dbReference type="Proteomes" id="UP000001976">
    <property type="component" value="Plasmid pSymB"/>
</dbReference>
<dbReference type="GO" id="GO:0018189">
    <property type="term" value="P:pyrroloquinoline quinone biosynthetic process"/>
    <property type="evidence" value="ECO:0007669"/>
    <property type="project" value="UniProtKB-UniRule"/>
</dbReference>
<dbReference type="HAMAP" id="MF_00656">
    <property type="entry name" value="PQQ_syn_PqqA"/>
    <property type="match status" value="1"/>
</dbReference>
<dbReference type="InterPro" id="IPR011725">
    <property type="entry name" value="PQQ_synth_PqqA"/>
</dbReference>
<dbReference type="NCBIfam" id="TIGR02107">
    <property type="entry name" value="PQQ_syn_pqqA"/>
    <property type="match status" value="1"/>
</dbReference>
<dbReference type="Pfam" id="PF08042">
    <property type="entry name" value="PqqA"/>
    <property type="match status" value="1"/>
</dbReference>
<protein>
    <recommendedName>
        <fullName>Coenzyme PQQ synthesis protein A</fullName>
    </recommendedName>
    <alternativeName>
        <fullName>Putative pyrroloquinoline quinone synthesis protein A</fullName>
    </alternativeName>
</protein>
<evidence type="ECO:0000250" key="1"/>
<evidence type="ECO:0000305" key="2"/>
<organism>
    <name type="scientific">Rhizobium meliloti (strain 1021)</name>
    <name type="common">Ensifer meliloti</name>
    <name type="synonym">Sinorhizobium meliloti</name>
    <dbReference type="NCBI Taxonomy" id="266834"/>
    <lineage>
        <taxon>Bacteria</taxon>
        <taxon>Pseudomonadati</taxon>
        <taxon>Pseudomonadota</taxon>
        <taxon>Alphaproteobacteria</taxon>
        <taxon>Hyphomicrobiales</taxon>
        <taxon>Rhizobiaceae</taxon>
        <taxon>Sinorhizobium/Ensifer group</taxon>
        <taxon>Sinorhizobium</taxon>
    </lineage>
</organism>
<name>PQQA_RHIME</name>
<accession>Q9EXV2</accession>
<proteinExistence type="inferred from homology"/>
<comment type="function">
    <text evidence="1">Required for coenzyme pyrroloquinoline quinone (PQQ) biosynthesis. PQQ is probably formed by cross-linking a specific glutamate to a specific tyrosine residue and excising these residues from the peptide (By similarity).</text>
</comment>
<comment type="pathway">
    <text>Cofactor biosynthesis; pyrroloquinoline quinone biosynthesis.</text>
</comment>
<comment type="similarity">
    <text evidence="2">Belongs to the PqqA family.</text>
</comment>
<geneLocation type="plasmid">
    <name>pSymB</name>
    <name>megaplasmid 2</name>
</geneLocation>
<gene>
    <name type="primary">pqqA</name>
    <name type="ordered locus">RB0197</name>
    <name type="ORF">SMb20204</name>
</gene>
<reference key="1">
    <citation type="submission" date="2000-10" db="EMBL/GenBank/DDBJ databases">
        <title>Mineral phosphate solubilization in Sinorhizobium meliloti.</title>
        <authorList>
            <person name="Finan T.M."/>
            <person name="Aneja P."/>
            <person name="Chain P."/>
            <person name="Napper K."/>
            <person name="Golding B."/>
        </authorList>
    </citation>
    <scope>NUCLEOTIDE SEQUENCE [GENOMIC DNA]</scope>
    <source>
        <strain>1021</strain>
    </source>
</reference>
<reference key="2">
    <citation type="journal article" date="2001" name="Proc. Natl. Acad. Sci. U.S.A.">
        <title>The complete sequence of the 1,683-kb pSymB megaplasmid from the N2-fixing endosymbiont Sinorhizobium meliloti.</title>
        <authorList>
            <person name="Finan T.M."/>
            <person name="Weidner S."/>
            <person name="Wong K."/>
            <person name="Buhrmester J."/>
            <person name="Chain P."/>
            <person name="Vorhoelter F.J."/>
            <person name="Hernandez-Lucas I."/>
            <person name="Becker A."/>
            <person name="Cowie A."/>
            <person name="Gouzy J."/>
            <person name="Golding B."/>
            <person name="Puehler A."/>
        </authorList>
    </citation>
    <scope>NUCLEOTIDE SEQUENCE [LARGE SCALE GENOMIC DNA]</scope>
    <source>
        <strain>1021</strain>
    </source>
</reference>
<reference key="3">
    <citation type="journal article" date="2001" name="Science">
        <title>The composite genome of the legume symbiont Sinorhizobium meliloti.</title>
        <authorList>
            <person name="Galibert F."/>
            <person name="Finan T.M."/>
            <person name="Long S.R."/>
            <person name="Puehler A."/>
            <person name="Abola P."/>
            <person name="Ampe F."/>
            <person name="Barloy-Hubler F."/>
            <person name="Barnett M.J."/>
            <person name="Becker A."/>
            <person name="Boistard P."/>
            <person name="Bothe G."/>
            <person name="Boutry M."/>
            <person name="Bowser L."/>
            <person name="Buhrmester J."/>
            <person name="Cadieu E."/>
            <person name="Capela D."/>
            <person name="Chain P."/>
            <person name="Cowie A."/>
            <person name="Davis R.W."/>
            <person name="Dreano S."/>
            <person name="Federspiel N.A."/>
            <person name="Fisher R.F."/>
            <person name="Gloux S."/>
            <person name="Godrie T."/>
            <person name="Goffeau A."/>
            <person name="Golding B."/>
            <person name="Gouzy J."/>
            <person name="Gurjal M."/>
            <person name="Hernandez-Lucas I."/>
            <person name="Hong A."/>
            <person name="Huizar L."/>
            <person name="Hyman R.W."/>
            <person name="Jones T."/>
            <person name="Kahn D."/>
            <person name="Kahn M.L."/>
            <person name="Kalman S."/>
            <person name="Keating D.H."/>
            <person name="Kiss E."/>
            <person name="Komp C."/>
            <person name="Lelaure V."/>
            <person name="Masuy D."/>
            <person name="Palm C."/>
            <person name="Peck M.C."/>
            <person name="Pohl T.M."/>
            <person name="Portetelle D."/>
            <person name="Purnelle B."/>
            <person name="Ramsperger U."/>
            <person name="Surzycki R."/>
            <person name="Thebault P."/>
            <person name="Vandenbol M."/>
            <person name="Vorhoelter F.J."/>
            <person name="Weidner S."/>
            <person name="Wells D.H."/>
            <person name="Wong K."/>
            <person name="Yeh K.-C."/>
            <person name="Batut J."/>
        </authorList>
    </citation>
    <scope>NUCLEOTIDE SEQUENCE [LARGE SCALE GENOMIC DNA]</scope>
    <source>
        <strain>1021</strain>
    </source>
</reference>
<feature type="chain" id="PRO_0000220318" description="Coenzyme PQQ synthesis protein A">
    <location>
        <begin position="1"/>
        <end position="31"/>
    </location>
</feature>
<feature type="cross-link" description="Pyrroloquinoline quinone (Glu-Tyr)" evidence="1">
    <location>
        <begin position="16"/>
        <end position="20"/>
    </location>
</feature>